<sequence>MSTLAKIEALLFVAGEDGIRVRQLAELLSLPPTGIQQSLGKLAQKYEKDPDSSLALIETSGAYRLVTKPQFAEILKEYSKAPINQSLSRAALETLSIIAYKQPITRIEIDAIRGVNSSGALAKLQAFDLIKEDGKKEVLGRPNLYVTTDYFLDYMGINHLEELPVIDELEIQAQESQLFGERIEEDENQ</sequence>
<proteinExistence type="inferred from homology"/>
<comment type="function">
    <text evidence="1">Participates in chromosomal partition during cell division. May act via the formation of a condensin-like complex containing Smc and ScpA that pull DNA away from mid-cell into both cell halves.</text>
</comment>
<comment type="subunit">
    <text evidence="1">Homodimer. Homodimerization may be required to stabilize the binding of ScpA to the Smc head domains. Component of a cohesin-like complex composed of ScpA, ScpB and the Smc homodimer, in which ScpA and ScpB bind to the head domain of Smc. The presence of the three proteins is required for the association of the complex with DNA.</text>
</comment>
<comment type="subcellular location">
    <subcellularLocation>
        <location evidence="1">Cytoplasm</location>
    </subcellularLocation>
    <text evidence="1">Associated with two foci at the outer edges of the nucleoid region in young cells, and at four foci within both cell halves in older cells.</text>
</comment>
<comment type="similarity">
    <text evidence="1">Belongs to the ScpB family.</text>
</comment>
<evidence type="ECO:0000255" key="1">
    <source>
        <dbReference type="HAMAP-Rule" id="MF_01804"/>
    </source>
</evidence>
<accession>B2ISX3</accession>
<dbReference type="EMBL" id="CP001033">
    <property type="protein sequence ID" value="ACB91100.1"/>
    <property type="molecule type" value="Genomic_DNA"/>
</dbReference>
<dbReference type="RefSeq" id="WP_000105310.1">
    <property type="nucleotide sequence ID" value="NC_010582.1"/>
</dbReference>
<dbReference type="SMR" id="B2ISX3"/>
<dbReference type="GeneID" id="45219111"/>
<dbReference type="KEGG" id="spw:SPCG_1848"/>
<dbReference type="HOGENOM" id="CLU_045647_5_3_9"/>
<dbReference type="GO" id="GO:0005737">
    <property type="term" value="C:cytoplasm"/>
    <property type="evidence" value="ECO:0007669"/>
    <property type="project" value="UniProtKB-SubCell"/>
</dbReference>
<dbReference type="GO" id="GO:0051301">
    <property type="term" value="P:cell division"/>
    <property type="evidence" value="ECO:0007669"/>
    <property type="project" value="UniProtKB-KW"/>
</dbReference>
<dbReference type="GO" id="GO:0051304">
    <property type="term" value="P:chromosome separation"/>
    <property type="evidence" value="ECO:0007669"/>
    <property type="project" value="InterPro"/>
</dbReference>
<dbReference type="GO" id="GO:0006260">
    <property type="term" value="P:DNA replication"/>
    <property type="evidence" value="ECO:0007669"/>
    <property type="project" value="UniProtKB-UniRule"/>
</dbReference>
<dbReference type="FunFam" id="1.10.10.10:FF:000507">
    <property type="entry name" value="Segregation and condensation protein B"/>
    <property type="match status" value="1"/>
</dbReference>
<dbReference type="FunFam" id="1.10.10.10:FF:000508">
    <property type="entry name" value="Segregation and condensation protein B"/>
    <property type="match status" value="1"/>
</dbReference>
<dbReference type="Gene3D" id="1.10.10.10">
    <property type="entry name" value="Winged helix-like DNA-binding domain superfamily/Winged helix DNA-binding domain"/>
    <property type="match status" value="2"/>
</dbReference>
<dbReference type="HAMAP" id="MF_01804">
    <property type="entry name" value="ScpB"/>
    <property type="match status" value="1"/>
</dbReference>
<dbReference type="InterPro" id="IPR005234">
    <property type="entry name" value="ScpB_csome_segregation"/>
</dbReference>
<dbReference type="InterPro" id="IPR036388">
    <property type="entry name" value="WH-like_DNA-bd_sf"/>
</dbReference>
<dbReference type="InterPro" id="IPR036390">
    <property type="entry name" value="WH_DNA-bd_sf"/>
</dbReference>
<dbReference type="NCBIfam" id="TIGR00281">
    <property type="entry name" value="SMC-Scp complex subunit ScpB"/>
    <property type="match status" value="1"/>
</dbReference>
<dbReference type="PANTHER" id="PTHR34298">
    <property type="entry name" value="SEGREGATION AND CONDENSATION PROTEIN B"/>
    <property type="match status" value="1"/>
</dbReference>
<dbReference type="PANTHER" id="PTHR34298:SF2">
    <property type="entry name" value="SEGREGATION AND CONDENSATION PROTEIN B"/>
    <property type="match status" value="1"/>
</dbReference>
<dbReference type="Pfam" id="PF04079">
    <property type="entry name" value="SMC_ScpB"/>
    <property type="match status" value="1"/>
</dbReference>
<dbReference type="PIRSF" id="PIRSF019345">
    <property type="entry name" value="ScpB"/>
    <property type="match status" value="1"/>
</dbReference>
<dbReference type="SUPFAM" id="SSF46785">
    <property type="entry name" value="Winged helix' DNA-binding domain"/>
    <property type="match status" value="2"/>
</dbReference>
<protein>
    <recommendedName>
        <fullName evidence="1">Segregation and condensation protein B</fullName>
    </recommendedName>
</protein>
<reference key="1">
    <citation type="journal article" date="2009" name="BMC Genomics">
        <title>Genome evolution driven by host adaptations results in a more virulent and antimicrobial-resistant Streptococcus pneumoniae serotype 14.</title>
        <authorList>
            <person name="Ding F."/>
            <person name="Tang P."/>
            <person name="Hsu M.-H."/>
            <person name="Cui P."/>
            <person name="Hu S."/>
            <person name="Yu J."/>
            <person name="Chiu C.-H."/>
        </authorList>
    </citation>
    <scope>NUCLEOTIDE SEQUENCE [LARGE SCALE GENOMIC DNA]</scope>
    <source>
        <strain>CGSP14</strain>
    </source>
</reference>
<keyword id="KW-0131">Cell cycle</keyword>
<keyword id="KW-0132">Cell division</keyword>
<keyword id="KW-0159">Chromosome partition</keyword>
<keyword id="KW-0963">Cytoplasm</keyword>
<gene>
    <name evidence="1" type="primary">scpB</name>
    <name type="ordered locus">SPCG_1848</name>
</gene>
<feature type="chain" id="PRO_1000215944" description="Segregation and condensation protein B">
    <location>
        <begin position="1"/>
        <end position="189"/>
    </location>
</feature>
<organism>
    <name type="scientific">Streptococcus pneumoniae (strain CGSP14)</name>
    <dbReference type="NCBI Taxonomy" id="516950"/>
    <lineage>
        <taxon>Bacteria</taxon>
        <taxon>Bacillati</taxon>
        <taxon>Bacillota</taxon>
        <taxon>Bacilli</taxon>
        <taxon>Lactobacillales</taxon>
        <taxon>Streptococcaceae</taxon>
        <taxon>Streptococcus</taxon>
    </lineage>
</organism>
<name>SCPB_STRPS</name>